<protein>
    <recommendedName>
        <fullName>2-aminoethylphosphonate--pyruvate transaminase</fullName>
        <ecNumber>2.6.1.37</ecNumber>
    </recommendedName>
    <alternativeName>
        <fullName>2-aminoethylphosphonate aminotransferase</fullName>
    </alternativeName>
    <alternativeName>
        <fullName>AEP transaminase</fullName>
        <shortName>AEPT</shortName>
    </alternativeName>
</protein>
<sequence length="371" mass="40418">MSTAERAPILLTPGPLTTSYRTRRAMMVDWGSWDSDFNELTASVCQRLLKIVGGEGSHTCVPLQGSGTFAVEAAIGTLVPRDGKVLVLINGAYGKRLAKICEVLQRPFSTLETEENVPTTAADVERLLAADPAISHVALIHCETSTGILNPLEAIAKVVERHGKRLIVDAMSSFGAIGIDARKVPFDALIAASGKCLEGVPGMGFVFARSAALEASAGNCHSLAMDLQDQHAYMRKTGQWRFTPPTHVVAALHEALSQYEEEGGLPARQRRYASNCETLLGEMARLGFRSFLPAEIQAPIIVTFHAPRDPRYRFADFYQRVREKGFILYPGKLTQVETFRVGCIGHVDAAEMRQAVAAIGEALRELEVLEI</sequence>
<reference key="1">
    <citation type="journal article" date="2000" name="Nature">
        <title>Complete genome sequence of Pseudomonas aeruginosa PAO1, an opportunistic pathogen.</title>
        <authorList>
            <person name="Stover C.K."/>
            <person name="Pham X.-Q.T."/>
            <person name="Erwin A.L."/>
            <person name="Mizoguchi S.D."/>
            <person name="Warrener P."/>
            <person name="Hickey M.J."/>
            <person name="Brinkman F.S.L."/>
            <person name="Hufnagle W.O."/>
            <person name="Kowalik D.J."/>
            <person name="Lagrou M."/>
            <person name="Garber R.L."/>
            <person name="Goltry L."/>
            <person name="Tolentino E."/>
            <person name="Westbrock-Wadman S."/>
            <person name="Yuan Y."/>
            <person name="Brody L.L."/>
            <person name="Coulter S.N."/>
            <person name="Folger K.R."/>
            <person name="Kas A."/>
            <person name="Larbig K."/>
            <person name="Lim R.M."/>
            <person name="Smith K.A."/>
            <person name="Spencer D.H."/>
            <person name="Wong G.K.-S."/>
            <person name="Wu Z."/>
            <person name="Paulsen I.T."/>
            <person name="Reizer J."/>
            <person name="Saier M.H. Jr."/>
            <person name="Hancock R.E.W."/>
            <person name="Lory S."/>
            <person name="Olson M.V."/>
        </authorList>
    </citation>
    <scope>NUCLEOTIDE SEQUENCE [LARGE SCALE GENOMIC DNA]</scope>
    <source>
        <strain>ATCC 15692 / DSM 22644 / CIP 104116 / JCM 14847 / LMG 12228 / 1C / PRS 101 / PAO1</strain>
    </source>
</reference>
<reference key="2">
    <citation type="journal article" date="1983" name="Eur. J. Biochem.">
        <title>Purification and properties of 2-aminoethylphosphonate:pyruvate aminotransferase from Pseudomonas aeruginosa.</title>
        <authorList>
            <person name="Dumora C."/>
            <person name="Lacoste A.-M."/>
            <person name="Cassaigne A."/>
        </authorList>
    </citation>
    <scope>BIOPHYSICAL CHARACTERIZATION</scope>
    <scope>INDUCTION</scope>
    <scope>ACTIVITY REGULATION</scope>
    <scope>COFACTOR</scope>
    <scope>SUBUNIT</scope>
    <source>
        <strain>A237</strain>
    </source>
</reference>
<reference key="3">
    <citation type="journal article" date="1993" name="Eur. J. Biochem.">
        <title>Stereochemistry of the reaction catalysed by 2-aminoethylphosphonate aminotransferase. A 1H-NMR study.</title>
        <authorList>
            <person name="Lacoste A.-M."/>
            <person name="Dumora C."/>
            <person name="Balas L."/>
            <person name="Hammerschmidt F."/>
            <person name="Vercauteren J."/>
        </authorList>
    </citation>
    <scope>STEREOSPECIFICITY</scope>
    <source>
        <strain>A237</strain>
    </source>
</reference>
<evidence type="ECO:0000255" key="1"/>
<evidence type="ECO:0000269" key="2">
    <source>
    </source>
</evidence>
<evidence type="ECO:0000305" key="3"/>
<evidence type="ECO:0007829" key="4">
    <source>
        <dbReference type="PDB" id="7E7G"/>
    </source>
</evidence>
<keyword id="KW-0002">3D-structure</keyword>
<keyword id="KW-0032">Aminotransferase</keyword>
<keyword id="KW-0663">Pyridoxal phosphate</keyword>
<keyword id="KW-0670">Pyruvate</keyword>
<keyword id="KW-1185">Reference proteome</keyword>
<keyword id="KW-0808">Transferase</keyword>
<name>PHNW_PSEAE</name>
<comment type="function">
    <text>Involved in phosphonate degradation.</text>
</comment>
<comment type="catalytic activity">
    <reaction>
        <text>(2-aminoethyl)phosphonate + pyruvate = phosphonoacetaldehyde + L-alanine</text>
        <dbReference type="Rhea" id="RHEA:17021"/>
        <dbReference type="ChEBI" id="CHEBI:15361"/>
        <dbReference type="ChEBI" id="CHEBI:57418"/>
        <dbReference type="ChEBI" id="CHEBI:57972"/>
        <dbReference type="ChEBI" id="CHEBI:58383"/>
        <dbReference type="EC" id="2.6.1.37"/>
    </reaction>
</comment>
<comment type="cofactor">
    <cofactor evidence="2">
        <name>pyridoxal 5'-phosphate</name>
        <dbReference type="ChEBI" id="CHEBI:597326"/>
    </cofactor>
    <text evidence="2">1 pyridoxal phosphate per subunit.</text>
</comment>
<comment type="activity regulation">
    <text evidence="2">Inhibited by phosphonic acids and very slightly inhibited by aminophosphonic acids.</text>
</comment>
<comment type="biophysicochemical properties">
    <kinetics>
        <KM>3.85 mM for 2-aminoethylphosphonate</KM>
        <KM>3.5 mM for pyruvate</KM>
    </kinetics>
    <phDependence>
        <text>Optimum pH is 8.5-9.</text>
    </phDependence>
    <temperatureDependence>
        <text>Optimum temperature is 50 degrees Celsius. Activity increases from 30 to 50 degrees Celsius, the enzyme is inactive at 70 degrees Celsius.</text>
    </temperatureDependence>
</comment>
<comment type="subunit">
    <text evidence="2">Homotetramer; however this is for an enzyme with a molecular weight of 16500, which is in disagreement with the weight of this protein.</text>
</comment>
<comment type="induction">
    <text evidence="2">By 2-aminoethylphosphonic acid.</text>
</comment>
<comment type="similarity">
    <text evidence="3">Belongs to the class-V pyridoxal-phosphate-dependent aminotransferase family. PhnW subfamily.</text>
</comment>
<feature type="chain" id="PRO_0000286773" description="2-aminoethylphosphonate--pyruvate transaminase">
    <location>
        <begin position="1"/>
        <end position="371"/>
    </location>
</feature>
<feature type="modified residue" description="N6-(pyridoxal phosphate)lysine" evidence="1">
    <location>
        <position position="195"/>
    </location>
</feature>
<feature type="strand" evidence="4">
    <location>
        <begin position="12"/>
        <end position="15"/>
    </location>
</feature>
<feature type="helix" evidence="4">
    <location>
        <begin position="20"/>
        <end position="24"/>
    </location>
</feature>
<feature type="helix" evidence="4">
    <location>
        <begin position="25"/>
        <end position="27"/>
    </location>
</feature>
<feature type="helix" evidence="4">
    <location>
        <begin position="35"/>
        <end position="52"/>
    </location>
</feature>
<feature type="turn" evidence="4">
    <location>
        <begin position="55"/>
        <end position="57"/>
    </location>
</feature>
<feature type="strand" evidence="4">
    <location>
        <begin position="58"/>
        <end position="65"/>
    </location>
</feature>
<feature type="helix" evidence="4">
    <location>
        <begin position="67"/>
        <end position="78"/>
    </location>
</feature>
<feature type="strand" evidence="4">
    <location>
        <begin position="84"/>
        <end position="91"/>
    </location>
</feature>
<feature type="helix" evidence="4">
    <location>
        <begin position="92"/>
        <end position="103"/>
    </location>
</feature>
<feature type="strand" evidence="4">
    <location>
        <begin position="108"/>
        <end position="112"/>
    </location>
</feature>
<feature type="strand" evidence="4">
    <location>
        <begin position="115"/>
        <end position="117"/>
    </location>
</feature>
<feature type="helix" evidence="4">
    <location>
        <begin position="121"/>
        <end position="130"/>
    </location>
</feature>
<feature type="strand" evidence="4">
    <location>
        <begin position="134"/>
        <end position="142"/>
    </location>
</feature>
<feature type="turn" evidence="4">
    <location>
        <begin position="144"/>
        <end position="146"/>
    </location>
</feature>
<feature type="helix" evidence="4">
    <location>
        <begin position="152"/>
        <end position="160"/>
    </location>
</feature>
<feature type="turn" evidence="4">
    <location>
        <begin position="161"/>
        <end position="163"/>
    </location>
</feature>
<feature type="strand" evidence="4">
    <location>
        <begin position="165"/>
        <end position="169"/>
    </location>
</feature>
<feature type="turn" evidence="4">
    <location>
        <begin position="171"/>
        <end position="176"/>
    </location>
</feature>
<feature type="turn" evidence="4">
    <location>
        <begin position="181"/>
        <end position="183"/>
    </location>
</feature>
<feature type="strand" evidence="4">
    <location>
        <begin position="187"/>
        <end position="195"/>
    </location>
</feature>
<feature type="strand" evidence="4">
    <location>
        <begin position="201"/>
        <end position="209"/>
    </location>
</feature>
<feature type="helix" evidence="4">
    <location>
        <begin position="210"/>
        <end position="214"/>
    </location>
</feature>
<feature type="helix" evidence="4">
    <location>
        <begin position="227"/>
        <end position="237"/>
    </location>
</feature>
<feature type="helix" evidence="4">
    <location>
        <begin position="246"/>
        <end position="262"/>
    </location>
</feature>
<feature type="helix" evidence="4">
    <location>
        <begin position="264"/>
        <end position="284"/>
    </location>
</feature>
<feature type="turn" evidence="4">
    <location>
        <begin position="285"/>
        <end position="287"/>
    </location>
</feature>
<feature type="strand" evidence="4">
    <location>
        <begin position="290"/>
        <end position="292"/>
    </location>
</feature>
<feature type="helix" evidence="4">
    <location>
        <begin position="294"/>
        <end position="296"/>
    </location>
</feature>
<feature type="strand" evidence="4">
    <location>
        <begin position="301"/>
        <end position="305"/>
    </location>
</feature>
<feature type="helix" evidence="4">
    <location>
        <begin position="314"/>
        <end position="323"/>
    </location>
</feature>
<feature type="strand" evidence="4">
    <location>
        <begin position="334"/>
        <end position="336"/>
    </location>
</feature>
<feature type="strand" evidence="4">
    <location>
        <begin position="338"/>
        <end position="342"/>
    </location>
</feature>
<feature type="helix" evidence="4">
    <location>
        <begin position="349"/>
        <end position="364"/>
    </location>
</feature>
<accession>Q9I434</accession>
<proteinExistence type="evidence at protein level"/>
<gene>
    <name type="primary">phnW</name>
    <name type="ordered locus">PA1310</name>
</gene>
<dbReference type="EC" id="2.6.1.37"/>
<dbReference type="EMBL" id="AE004091">
    <property type="protein sequence ID" value="AAG04699.1"/>
    <property type="molecule type" value="Genomic_DNA"/>
</dbReference>
<dbReference type="PIR" id="B83482">
    <property type="entry name" value="B83482"/>
</dbReference>
<dbReference type="RefSeq" id="NP_250001.1">
    <property type="nucleotide sequence ID" value="NC_002516.2"/>
</dbReference>
<dbReference type="RefSeq" id="WP_003112368.1">
    <property type="nucleotide sequence ID" value="NZ_QZGE01000005.1"/>
</dbReference>
<dbReference type="PDB" id="7E7G">
    <property type="method" value="X-ray"/>
    <property type="resolution" value="2.35 A"/>
    <property type="chains" value="A=1-371"/>
</dbReference>
<dbReference type="PDBsum" id="7E7G"/>
<dbReference type="SMR" id="Q9I434"/>
<dbReference type="STRING" id="208964.PA1310"/>
<dbReference type="PaxDb" id="208964-PA1310"/>
<dbReference type="GeneID" id="881491"/>
<dbReference type="KEGG" id="pae:PA1310"/>
<dbReference type="PATRIC" id="fig|208964.12.peg.1361"/>
<dbReference type="PseudoCAP" id="PA1310"/>
<dbReference type="HOGENOM" id="CLU_027686_3_1_6"/>
<dbReference type="InParanoid" id="Q9I434"/>
<dbReference type="OrthoDB" id="9766472at2"/>
<dbReference type="PhylomeDB" id="Q9I434"/>
<dbReference type="BioCyc" id="MetaCyc:MONOMER-15967"/>
<dbReference type="BioCyc" id="PAER208964:G1FZ6-1335-MONOMER"/>
<dbReference type="BRENDA" id="2.6.1.37">
    <property type="organism ID" value="5087"/>
</dbReference>
<dbReference type="Proteomes" id="UP000002438">
    <property type="component" value="Chromosome"/>
</dbReference>
<dbReference type="GO" id="GO:0047304">
    <property type="term" value="F:2-aminoethylphosphonate-pyruvate transaminase activity"/>
    <property type="evidence" value="ECO:0007669"/>
    <property type="project" value="UniProtKB-UniRule"/>
</dbReference>
<dbReference type="GO" id="GO:0019700">
    <property type="term" value="P:organic phosphonate catabolic process"/>
    <property type="evidence" value="ECO:0007669"/>
    <property type="project" value="InterPro"/>
</dbReference>
<dbReference type="Gene3D" id="3.90.1150.10">
    <property type="entry name" value="Aspartate Aminotransferase, domain 1"/>
    <property type="match status" value="1"/>
</dbReference>
<dbReference type="Gene3D" id="3.40.640.10">
    <property type="entry name" value="Type I PLP-dependent aspartate aminotransferase-like (Major domain)"/>
    <property type="match status" value="1"/>
</dbReference>
<dbReference type="HAMAP" id="MF_01376">
    <property type="entry name" value="PhnW_aminotrans_5"/>
    <property type="match status" value="1"/>
</dbReference>
<dbReference type="InterPro" id="IPR000192">
    <property type="entry name" value="Aminotrans_V_dom"/>
</dbReference>
<dbReference type="InterPro" id="IPR012703">
    <property type="entry name" value="NH2EtPonate_pyrv_transaminase"/>
</dbReference>
<dbReference type="InterPro" id="IPR015424">
    <property type="entry name" value="PyrdxlP-dep_Trfase"/>
</dbReference>
<dbReference type="InterPro" id="IPR015421">
    <property type="entry name" value="PyrdxlP-dep_Trfase_major"/>
</dbReference>
<dbReference type="InterPro" id="IPR015422">
    <property type="entry name" value="PyrdxlP-dep_Trfase_small"/>
</dbReference>
<dbReference type="InterPro" id="IPR024169">
    <property type="entry name" value="SP_NH2Trfase/AEP_transaminase"/>
</dbReference>
<dbReference type="NCBIfam" id="TIGR03301">
    <property type="entry name" value="PhnW-AepZ"/>
    <property type="match status" value="1"/>
</dbReference>
<dbReference type="NCBIfam" id="NF010006">
    <property type="entry name" value="PRK13479.1"/>
    <property type="match status" value="1"/>
</dbReference>
<dbReference type="NCBIfam" id="TIGR02326">
    <property type="entry name" value="transamin_PhnW"/>
    <property type="match status" value="1"/>
</dbReference>
<dbReference type="PANTHER" id="PTHR42778">
    <property type="entry name" value="2-AMINOETHYLPHOSPHONATE--PYRUVATE TRANSAMINASE"/>
    <property type="match status" value="1"/>
</dbReference>
<dbReference type="PANTHER" id="PTHR42778:SF1">
    <property type="entry name" value="2-AMINOETHYLPHOSPHONATE--PYRUVATE TRANSAMINASE"/>
    <property type="match status" value="1"/>
</dbReference>
<dbReference type="Pfam" id="PF00266">
    <property type="entry name" value="Aminotran_5"/>
    <property type="match status" value="1"/>
</dbReference>
<dbReference type="PIRSF" id="PIRSF000524">
    <property type="entry name" value="SPT"/>
    <property type="match status" value="1"/>
</dbReference>
<dbReference type="SUPFAM" id="SSF53383">
    <property type="entry name" value="PLP-dependent transferases"/>
    <property type="match status" value="1"/>
</dbReference>
<organism>
    <name type="scientific">Pseudomonas aeruginosa (strain ATCC 15692 / DSM 22644 / CIP 104116 / JCM 14847 / LMG 12228 / 1C / PRS 101 / PAO1)</name>
    <dbReference type="NCBI Taxonomy" id="208964"/>
    <lineage>
        <taxon>Bacteria</taxon>
        <taxon>Pseudomonadati</taxon>
        <taxon>Pseudomonadota</taxon>
        <taxon>Gammaproteobacteria</taxon>
        <taxon>Pseudomonadales</taxon>
        <taxon>Pseudomonadaceae</taxon>
        <taxon>Pseudomonas</taxon>
    </lineage>
</organism>